<sequence length="347" mass="36863">MTNKTSLSYKDAGVDIDAGNDLVDRIKGVVKQTRRPEVMGGLGGFGALCALPQKYREPILVSGTDGVGTKLRLAMDLKRHDTIGIDLVAMCVNDLVVQGAEPLFFLDYFATGKLDVDTAASVITGIAEGCKQSGCALVGGETAEMPGMYHGDDYDVAGFCVGVVEKSEIIDGSKVTPGDVLVALGASGPHSNGYSLVRKILDVSNTNPEQTSLEGKSLADHLLEPTKIYVKSILSLIEQLDIHAIAHLTGGGFWENIPRVLPQGMQAVIDEASWQWPAVFSWLQHAGNVSRHEMYRTFNCGVGMVVALPAELADKAVELLTASGEKAWKIGVIAAATEGAEQVIINP</sequence>
<keyword id="KW-0067">ATP-binding</keyword>
<keyword id="KW-0963">Cytoplasm</keyword>
<keyword id="KW-0436">Ligase</keyword>
<keyword id="KW-0547">Nucleotide-binding</keyword>
<keyword id="KW-0658">Purine biosynthesis</keyword>
<accession>B1JSF4</accession>
<dbReference type="EC" id="6.3.3.1" evidence="1"/>
<dbReference type="EMBL" id="CP000950">
    <property type="protein sequence ID" value="ACA67645.1"/>
    <property type="molecule type" value="Genomic_DNA"/>
</dbReference>
<dbReference type="RefSeq" id="WP_011192770.1">
    <property type="nucleotide sequence ID" value="NZ_CP009792.1"/>
</dbReference>
<dbReference type="SMR" id="B1JSF4"/>
<dbReference type="KEGG" id="ypy:YPK_1351"/>
<dbReference type="PATRIC" id="fig|502800.11.peg.1987"/>
<dbReference type="UniPathway" id="UPA00074">
    <property type="reaction ID" value="UER00129"/>
</dbReference>
<dbReference type="GO" id="GO:0005829">
    <property type="term" value="C:cytosol"/>
    <property type="evidence" value="ECO:0007669"/>
    <property type="project" value="TreeGrafter"/>
</dbReference>
<dbReference type="GO" id="GO:0005524">
    <property type="term" value="F:ATP binding"/>
    <property type="evidence" value="ECO:0007669"/>
    <property type="project" value="UniProtKB-KW"/>
</dbReference>
<dbReference type="GO" id="GO:0004637">
    <property type="term" value="F:phosphoribosylamine-glycine ligase activity"/>
    <property type="evidence" value="ECO:0007669"/>
    <property type="project" value="TreeGrafter"/>
</dbReference>
<dbReference type="GO" id="GO:0004641">
    <property type="term" value="F:phosphoribosylformylglycinamidine cyclo-ligase activity"/>
    <property type="evidence" value="ECO:0007669"/>
    <property type="project" value="UniProtKB-UniRule"/>
</dbReference>
<dbReference type="GO" id="GO:0006189">
    <property type="term" value="P:'de novo' IMP biosynthetic process"/>
    <property type="evidence" value="ECO:0007669"/>
    <property type="project" value="UniProtKB-UniRule"/>
</dbReference>
<dbReference type="GO" id="GO:0046084">
    <property type="term" value="P:adenine biosynthetic process"/>
    <property type="evidence" value="ECO:0007669"/>
    <property type="project" value="TreeGrafter"/>
</dbReference>
<dbReference type="CDD" id="cd02196">
    <property type="entry name" value="PurM"/>
    <property type="match status" value="1"/>
</dbReference>
<dbReference type="FunFam" id="3.30.1330.10:FF:000001">
    <property type="entry name" value="Phosphoribosylformylglycinamidine cyclo-ligase"/>
    <property type="match status" value="1"/>
</dbReference>
<dbReference type="FunFam" id="3.90.650.10:FF:000001">
    <property type="entry name" value="Phosphoribosylformylglycinamidine cyclo-ligase"/>
    <property type="match status" value="1"/>
</dbReference>
<dbReference type="Gene3D" id="3.90.650.10">
    <property type="entry name" value="PurM-like C-terminal domain"/>
    <property type="match status" value="1"/>
</dbReference>
<dbReference type="Gene3D" id="3.30.1330.10">
    <property type="entry name" value="PurM-like, N-terminal domain"/>
    <property type="match status" value="1"/>
</dbReference>
<dbReference type="HAMAP" id="MF_00741">
    <property type="entry name" value="AIRS"/>
    <property type="match status" value="1"/>
</dbReference>
<dbReference type="InterPro" id="IPR010918">
    <property type="entry name" value="PurM-like_C_dom"/>
</dbReference>
<dbReference type="InterPro" id="IPR036676">
    <property type="entry name" value="PurM-like_C_sf"/>
</dbReference>
<dbReference type="InterPro" id="IPR016188">
    <property type="entry name" value="PurM-like_N"/>
</dbReference>
<dbReference type="InterPro" id="IPR036921">
    <property type="entry name" value="PurM-like_N_sf"/>
</dbReference>
<dbReference type="InterPro" id="IPR004733">
    <property type="entry name" value="PurM_cligase"/>
</dbReference>
<dbReference type="NCBIfam" id="TIGR00878">
    <property type="entry name" value="purM"/>
    <property type="match status" value="1"/>
</dbReference>
<dbReference type="PANTHER" id="PTHR10520:SF12">
    <property type="entry name" value="TRIFUNCTIONAL PURINE BIOSYNTHETIC PROTEIN ADENOSINE-3"/>
    <property type="match status" value="1"/>
</dbReference>
<dbReference type="PANTHER" id="PTHR10520">
    <property type="entry name" value="TRIFUNCTIONAL PURINE BIOSYNTHETIC PROTEIN ADENOSINE-3-RELATED"/>
    <property type="match status" value="1"/>
</dbReference>
<dbReference type="Pfam" id="PF00586">
    <property type="entry name" value="AIRS"/>
    <property type="match status" value="1"/>
</dbReference>
<dbReference type="Pfam" id="PF02769">
    <property type="entry name" value="AIRS_C"/>
    <property type="match status" value="1"/>
</dbReference>
<dbReference type="SUPFAM" id="SSF56042">
    <property type="entry name" value="PurM C-terminal domain-like"/>
    <property type="match status" value="1"/>
</dbReference>
<dbReference type="SUPFAM" id="SSF55326">
    <property type="entry name" value="PurM N-terminal domain-like"/>
    <property type="match status" value="1"/>
</dbReference>
<comment type="catalytic activity">
    <reaction evidence="1">
        <text>2-formamido-N(1)-(5-O-phospho-beta-D-ribosyl)acetamidine + ATP = 5-amino-1-(5-phospho-beta-D-ribosyl)imidazole + ADP + phosphate + H(+)</text>
        <dbReference type="Rhea" id="RHEA:23032"/>
        <dbReference type="ChEBI" id="CHEBI:15378"/>
        <dbReference type="ChEBI" id="CHEBI:30616"/>
        <dbReference type="ChEBI" id="CHEBI:43474"/>
        <dbReference type="ChEBI" id="CHEBI:137981"/>
        <dbReference type="ChEBI" id="CHEBI:147287"/>
        <dbReference type="ChEBI" id="CHEBI:456216"/>
        <dbReference type="EC" id="6.3.3.1"/>
    </reaction>
</comment>
<comment type="pathway">
    <text evidence="1">Purine metabolism; IMP biosynthesis via de novo pathway; 5-amino-1-(5-phospho-D-ribosyl)imidazole from N(2)-formyl-N(1)-(5-phospho-D-ribosyl)glycinamide: step 2/2.</text>
</comment>
<comment type="subcellular location">
    <subcellularLocation>
        <location evidence="1">Cytoplasm</location>
    </subcellularLocation>
</comment>
<comment type="similarity">
    <text evidence="1">Belongs to the AIR synthase family.</text>
</comment>
<protein>
    <recommendedName>
        <fullName evidence="1">Phosphoribosylformylglycinamidine cyclo-ligase</fullName>
        <ecNumber evidence="1">6.3.3.1</ecNumber>
    </recommendedName>
    <alternativeName>
        <fullName evidence="1">AIR synthase</fullName>
    </alternativeName>
    <alternativeName>
        <fullName evidence="1">AIRS</fullName>
    </alternativeName>
    <alternativeName>
        <fullName evidence="1">Phosphoribosyl-aminoimidazole synthetase</fullName>
    </alternativeName>
</protein>
<name>PUR5_YERPY</name>
<feature type="chain" id="PRO_1000193060" description="Phosphoribosylformylglycinamidine cyclo-ligase">
    <location>
        <begin position="1"/>
        <end position="347"/>
    </location>
</feature>
<organism>
    <name type="scientific">Yersinia pseudotuberculosis serotype O:3 (strain YPIII)</name>
    <dbReference type="NCBI Taxonomy" id="502800"/>
    <lineage>
        <taxon>Bacteria</taxon>
        <taxon>Pseudomonadati</taxon>
        <taxon>Pseudomonadota</taxon>
        <taxon>Gammaproteobacteria</taxon>
        <taxon>Enterobacterales</taxon>
        <taxon>Yersiniaceae</taxon>
        <taxon>Yersinia</taxon>
    </lineage>
</organism>
<proteinExistence type="inferred from homology"/>
<gene>
    <name evidence="1" type="primary">purM</name>
    <name type="ordered locus">YPK_1351</name>
</gene>
<reference key="1">
    <citation type="submission" date="2008-02" db="EMBL/GenBank/DDBJ databases">
        <title>Complete sequence of Yersinia pseudotuberculosis YPIII.</title>
        <authorList>
            <consortium name="US DOE Joint Genome Institute"/>
            <person name="Copeland A."/>
            <person name="Lucas S."/>
            <person name="Lapidus A."/>
            <person name="Glavina del Rio T."/>
            <person name="Dalin E."/>
            <person name="Tice H."/>
            <person name="Bruce D."/>
            <person name="Goodwin L."/>
            <person name="Pitluck S."/>
            <person name="Munk A.C."/>
            <person name="Brettin T."/>
            <person name="Detter J.C."/>
            <person name="Han C."/>
            <person name="Tapia R."/>
            <person name="Schmutz J."/>
            <person name="Larimer F."/>
            <person name="Land M."/>
            <person name="Hauser L."/>
            <person name="Challacombe J.F."/>
            <person name="Green L."/>
            <person name="Lindler L.E."/>
            <person name="Nikolich M.P."/>
            <person name="Richardson P."/>
        </authorList>
    </citation>
    <scope>NUCLEOTIDE SEQUENCE [LARGE SCALE GENOMIC DNA]</scope>
    <source>
        <strain>YPIII</strain>
    </source>
</reference>
<evidence type="ECO:0000255" key="1">
    <source>
        <dbReference type="HAMAP-Rule" id="MF_00741"/>
    </source>
</evidence>